<name>SSB_CUPNH</name>
<geneLocation type="plasmid">
    <name>megaplasmid pHG1</name>
</geneLocation>
<organism>
    <name type="scientific">Cupriavidus necator (strain ATCC 17699 / DSM 428 / KCTC 22496 / NCIMB 10442 / H16 / Stanier 337)</name>
    <name type="common">Ralstonia eutropha</name>
    <dbReference type="NCBI Taxonomy" id="381666"/>
    <lineage>
        <taxon>Bacteria</taxon>
        <taxon>Pseudomonadati</taxon>
        <taxon>Pseudomonadota</taxon>
        <taxon>Betaproteobacteria</taxon>
        <taxon>Burkholderiales</taxon>
        <taxon>Burkholderiaceae</taxon>
        <taxon>Cupriavidus</taxon>
    </lineage>
</organism>
<gene>
    <name type="primary">ssb</name>
    <name type="ordered locus">PHG335</name>
</gene>
<protein>
    <recommendedName>
        <fullName evidence="1">Single-stranded DNA-binding protein</fullName>
        <shortName evidence="1">SSB</shortName>
    </recommendedName>
</protein>
<reference key="1">
    <citation type="journal article" date="2003" name="J. Mol. Biol.">
        <title>Complete nucleotide sequence of pHG1: a Ralstonia eutropha H16 megaplasmid encoding key enzymes of H(2)-based lithoautotrophy and anaerobiosis.</title>
        <authorList>
            <person name="Schwartz E."/>
            <person name="Henne A."/>
            <person name="Cramm R."/>
            <person name="Eitinger T."/>
            <person name="Friedrich B."/>
            <person name="Gottschalk G."/>
        </authorList>
    </citation>
    <scope>NUCLEOTIDE SEQUENCE [LARGE SCALE GENOMIC DNA]</scope>
    <source>
        <strain>ATCC 17699 / DSM 428 / KCTC 22496 / NCIMB 10442 / H16 / Stanier 337</strain>
    </source>
</reference>
<proteinExistence type="inferred from homology"/>
<dbReference type="EMBL" id="AY305378">
    <property type="protein sequence ID" value="AAP86084.1"/>
    <property type="molecule type" value="Genomic_DNA"/>
</dbReference>
<dbReference type="RefSeq" id="WP_011154247.1">
    <property type="nucleotide sequence ID" value="NC_005241.1"/>
</dbReference>
<dbReference type="SMR" id="P59927"/>
<dbReference type="STRING" id="381666.H16_A0402"/>
<dbReference type="KEGG" id="reh:PHG335"/>
<dbReference type="PATRIC" id="fig|381666.6.peg.273"/>
<dbReference type="eggNOG" id="COG0629">
    <property type="taxonomic scope" value="Bacteria"/>
</dbReference>
<dbReference type="HOGENOM" id="CLU_078758_0_1_4"/>
<dbReference type="OrthoDB" id="9809878at2"/>
<dbReference type="Proteomes" id="UP000008210">
    <property type="component" value="Plasmid megaplasmid pHG1"/>
</dbReference>
<dbReference type="GO" id="GO:0009295">
    <property type="term" value="C:nucleoid"/>
    <property type="evidence" value="ECO:0007669"/>
    <property type="project" value="TreeGrafter"/>
</dbReference>
<dbReference type="GO" id="GO:0003697">
    <property type="term" value="F:single-stranded DNA binding"/>
    <property type="evidence" value="ECO:0007669"/>
    <property type="project" value="UniProtKB-UniRule"/>
</dbReference>
<dbReference type="GO" id="GO:0006260">
    <property type="term" value="P:DNA replication"/>
    <property type="evidence" value="ECO:0007669"/>
    <property type="project" value="InterPro"/>
</dbReference>
<dbReference type="CDD" id="cd04496">
    <property type="entry name" value="SSB_OBF"/>
    <property type="match status" value="1"/>
</dbReference>
<dbReference type="Gene3D" id="2.40.50.140">
    <property type="entry name" value="Nucleic acid-binding proteins"/>
    <property type="match status" value="1"/>
</dbReference>
<dbReference type="HAMAP" id="MF_00984">
    <property type="entry name" value="SSB"/>
    <property type="match status" value="1"/>
</dbReference>
<dbReference type="InterPro" id="IPR012340">
    <property type="entry name" value="NA-bd_OB-fold"/>
</dbReference>
<dbReference type="InterPro" id="IPR000424">
    <property type="entry name" value="Primosome_PriB/ssb"/>
</dbReference>
<dbReference type="InterPro" id="IPR011344">
    <property type="entry name" value="ssDNA-bd"/>
</dbReference>
<dbReference type="NCBIfam" id="NF005406">
    <property type="entry name" value="PRK06958.1"/>
    <property type="match status" value="1"/>
</dbReference>
<dbReference type="NCBIfam" id="TIGR00621">
    <property type="entry name" value="ssb"/>
    <property type="match status" value="1"/>
</dbReference>
<dbReference type="PANTHER" id="PTHR10302">
    <property type="entry name" value="SINGLE-STRANDED DNA-BINDING PROTEIN"/>
    <property type="match status" value="1"/>
</dbReference>
<dbReference type="PANTHER" id="PTHR10302:SF27">
    <property type="entry name" value="SINGLE-STRANDED DNA-BINDING PROTEIN"/>
    <property type="match status" value="1"/>
</dbReference>
<dbReference type="Pfam" id="PF00436">
    <property type="entry name" value="SSB"/>
    <property type="match status" value="1"/>
</dbReference>
<dbReference type="SUPFAM" id="SSF50249">
    <property type="entry name" value="Nucleic acid-binding proteins"/>
    <property type="match status" value="1"/>
</dbReference>
<dbReference type="PROSITE" id="PS50935">
    <property type="entry name" value="SSB"/>
    <property type="match status" value="1"/>
</dbReference>
<feature type="chain" id="PRO_0000095995" description="Single-stranded DNA-binding protein">
    <location>
        <begin position="1"/>
        <end position="188"/>
    </location>
</feature>
<feature type="domain" description="SSB" evidence="1">
    <location>
        <begin position="4"/>
        <end position="109"/>
    </location>
</feature>
<feature type="region of interest" description="Disordered" evidence="2">
    <location>
        <begin position="108"/>
        <end position="188"/>
    </location>
</feature>
<feature type="compositionally biased region" description="Low complexity" evidence="2">
    <location>
        <begin position="124"/>
        <end position="152"/>
    </location>
</feature>
<keyword id="KW-0238">DNA-binding</keyword>
<keyword id="KW-0614">Plasmid</keyword>
<keyword id="KW-1185">Reference proteome</keyword>
<sequence>MASVNKVILVGNLGADPEVRYMPSGDAVANLRIATTDRYKDKQSGEMKEATEWHRVSMFGKLAEIAGQYLRKGSSVYIEGRIRTRKWQDQSGQDKYSTEIVADQMQMLGGRGGASDGDSDSGTDRSASQQSPASAQRSAPTGQRQPPARRQPAQPPSNGFGDFNEDIPFARPAALDGIPFRNDGAPRY</sequence>
<evidence type="ECO:0000255" key="1">
    <source>
        <dbReference type="HAMAP-Rule" id="MF_00984"/>
    </source>
</evidence>
<evidence type="ECO:0000256" key="2">
    <source>
        <dbReference type="SAM" id="MobiDB-lite"/>
    </source>
</evidence>
<comment type="subunit">
    <text evidence="1">Homotetramer.</text>
</comment>
<accession>P59927</accession>
<accession>Q7WX07</accession>